<evidence type="ECO:0000255" key="1">
    <source>
        <dbReference type="HAMAP-Rule" id="MF_00563"/>
    </source>
</evidence>
<name>SAHH_VARPS</name>
<sequence length="479" mass="52070">MSAVLKPTPVSTADQAIADLSLAAWGRKEIKIAETEMPGLMAIREEFSKAQPLKGARITGSLHMTIQTAVLIETLQALGATVRWASCNIFSTQDHAAAAIAAAGTPVFAIKGESLKDYWDYTHAIFDFGPKGSQGEGPNMILDDGGDATLLMHLGQRAEKDLGVLSKPTSEEERILYAAIKAKLAVDPTWYTRKSAEIIGVTEETTTGVHRLNEMSAKGTLLFRAINVNDSVTKSKFDNLYGCRESLVDGIKRATDVMIAGKVACVAGYGDVGKGSAQALRALSAQVWVTEIDPINALQAAMEGYKVVTMEYAADKADIFVTTTGNRDVIRHEHMAAMKDQAIVCNIGHFDNEIDVASIEKYEWEEIKPQVDHITFPDGKKIILLAKGRLVNLGCGTGHPSFVMSSSFANQTIAQIELFTKPDAYQAGKVYVLPKHLDEKVARLHLKKVGAMLTELTDEQAAYIGVSKNGPYKPDTYRY</sequence>
<organism>
    <name type="scientific">Variovorax paradoxus (strain S110)</name>
    <dbReference type="NCBI Taxonomy" id="543728"/>
    <lineage>
        <taxon>Bacteria</taxon>
        <taxon>Pseudomonadati</taxon>
        <taxon>Pseudomonadota</taxon>
        <taxon>Betaproteobacteria</taxon>
        <taxon>Burkholderiales</taxon>
        <taxon>Comamonadaceae</taxon>
        <taxon>Variovorax</taxon>
    </lineage>
</organism>
<gene>
    <name evidence="1" type="primary">ahcY</name>
    <name type="ordered locus">Vapar_4683</name>
</gene>
<comment type="function">
    <text evidence="1">May play a key role in the regulation of the intracellular concentration of adenosylhomocysteine.</text>
</comment>
<comment type="catalytic activity">
    <reaction evidence="1">
        <text>S-adenosyl-L-homocysteine + H2O = L-homocysteine + adenosine</text>
        <dbReference type="Rhea" id="RHEA:21708"/>
        <dbReference type="ChEBI" id="CHEBI:15377"/>
        <dbReference type="ChEBI" id="CHEBI:16335"/>
        <dbReference type="ChEBI" id="CHEBI:57856"/>
        <dbReference type="ChEBI" id="CHEBI:58199"/>
        <dbReference type="EC" id="3.13.2.1"/>
    </reaction>
</comment>
<comment type="cofactor">
    <cofactor evidence="1">
        <name>NAD(+)</name>
        <dbReference type="ChEBI" id="CHEBI:57540"/>
    </cofactor>
    <text evidence="1">Binds 1 NAD(+) per subunit.</text>
</comment>
<comment type="pathway">
    <text evidence="1">Amino-acid biosynthesis; L-homocysteine biosynthesis; L-homocysteine from S-adenosyl-L-homocysteine: step 1/1.</text>
</comment>
<comment type="subcellular location">
    <subcellularLocation>
        <location evidence="1">Cytoplasm</location>
    </subcellularLocation>
</comment>
<comment type="similarity">
    <text evidence="1">Belongs to the adenosylhomocysteinase family.</text>
</comment>
<keyword id="KW-0963">Cytoplasm</keyword>
<keyword id="KW-0378">Hydrolase</keyword>
<keyword id="KW-0520">NAD</keyword>
<keyword id="KW-0554">One-carbon metabolism</keyword>
<dbReference type="EC" id="3.13.2.1" evidence="1"/>
<dbReference type="EMBL" id="CP001635">
    <property type="protein sequence ID" value="ACS21288.1"/>
    <property type="molecule type" value="Genomic_DNA"/>
</dbReference>
<dbReference type="SMR" id="C5CM29"/>
<dbReference type="STRING" id="543728.Vapar_4683"/>
<dbReference type="KEGG" id="vap:Vapar_4683"/>
<dbReference type="eggNOG" id="COG0499">
    <property type="taxonomic scope" value="Bacteria"/>
</dbReference>
<dbReference type="HOGENOM" id="CLU_025194_2_1_4"/>
<dbReference type="OrthoDB" id="9802717at2"/>
<dbReference type="UniPathway" id="UPA00314">
    <property type="reaction ID" value="UER00076"/>
</dbReference>
<dbReference type="GO" id="GO:0005829">
    <property type="term" value="C:cytosol"/>
    <property type="evidence" value="ECO:0007669"/>
    <property type="project" value="TreeGrafter"/>
</dbReference>
<dbReference type="GO" id="GO:0004013">
    <property type="term" value="F:adenosylhomocysteinase activity"/>
    <property type="evidence" value="ECO:0007669"/>
    <property type="project" value="UniProtKB-UniRule"/>
</dbReference>
<dbReference type="GO" id="GO:0071269">
    <property type="term" value="P:L-homocysteine biosynthetic process"/>
    <property type="evidence" value="ECO:0007669"/>
    <property type="project" value="UniProtKB-UniRule"/>
</dbReference>
<dbReference type="GO" id="GO:0006730">
    <property type="term" value="P:one-carbon metabolic process"/>
    <property type="evidence" value="ECO:0007669"/>
    <property type="project" value="UniProtKB-KW"/>
</dbReference>
<dbReference type="GO" id="GO:0033353">
    <property type="term" value="P:S-adenosylmethionine cycle"/>
    <property type="evidence" value="ECO:0007669"/>
    <property type="project" value="TreeGrafter"/>
</dbReference>
<dbReference type="CDD" id="cd00401">
    <property type="entry name" value="SAHH"/>
    <property type="match status" value="1"/>
</dbReference>
<dbReference type="FunFam" id="3.40.50.720:FF:000004">
    <property type="entry name" value="Adenosylhomocysteinase"/>
    <property type="match status" value="1"/>
</dbReference>
<dbReference type="Gene3D" id="3.40.50.1480">
    <property type="entry name" value="Adenosylhomocysteinase-like"/>
    <property type="match status" value="1"/>
</dbReference>
<dbReference type="Gene3D" id="3.40.50.720">
    <property type="entry name" value="NAD(P)-binding Rossmann-like Domain"/>
    <property type="match status" value="1"/>
</dbReference>
<dbReference type="HAMAP" id="MF_00563">
    <property type="entry name" value="AdoHcyase"/>
    <property type="match status" value="1"/>
</dbReference>
<dbReference type="InterPro" id="IPR042172">
    <property type="entry name" value="Adenosylhomocyst_ase-like_sf"/>
</dbReference>
<dbReference type="InterPro" id="IPR000043">
    <property type="entry name" value="Adenosylhomocysteinase-like"/>
</dbReference>
<dbReference type="InterPro" id="IPR015878">
    <property type="entry name" value="Ado_hCys_hydrolase_NAD-bd"/>
</dbReference>
<dbReference type="InterPro" id="IPR036291">
    <property type="entry name" value="NAD(P)-bd_dom_sf"/>
</dbReference>
<dbReference type="InterPro" id="IPR020082">
    <property type="entry name" value="S-Ado-L-homoCys_hydrolase_CS"/>
</dbReference>
<dbReference type="NCBIfam" id="TIGR00936">
    <property type="entry name" value="ahcY"/>
    <property type="match status" value="1"/>
</dbReference>
<dbReference type="NCBIfam" id="NF004005">
    <property type="entry name" value="PRK05476.2-3"/>
    <property type="match status" value="1"/>
</dbReference>
<dbReference type="PANTHER" id="PTHR23420">
    <property type="entry name" value="ADENOSYLHOMOCYSTEINASE"/>
    <property type="match status" value="1"/>
</dbReference>
<dbReference type="PANTHER" id="PTHR23420:SF0">
    <property type="entry name" value="ADENOSYLHOMOCYSTEINASE"/>
    <property type="match status" value="1"/>
</dbReference>
<dbReference type="Pfam" id="PF05221">
    <property type="entry name" value="AdoHcyase"/>
    <property type="match status" value="1"/>
</dbReference>
<dbReference type="Pfam" id="PF00670">
    <property type="entry name" value="AdoHcyase_NAD"/>
    <property type="match status" value="1"/>
</dbReference>
<dbReference type="PIRSF" id="PIRSF001109">
    <property type="entry name" value="Ad_hcy_hydrolase"/>
    <property type="match status" value="1"/>
</dbReference>
<dbReference type="SMART" id="SM00996">
    <property type="entry name" value="AdoHcyase"/>
    <property type="match status" value="1"/>
</dbReference>
<dbReference type="SMART" id="SM00997">
    <property type="entry name" value="AdoHcyase_NAD"/>
    <property type="match status" value="1"/>
</dbReference>
<dbReference type="SUPFAM" id="SSF52283">
    <property type="entry name" value="Formate/glycerate dehydrogenase catalytic domain-like"/>
    <property type="match status" value="1"/>
</dbReference>
<dbReference type="SUPFAM" id="SSF51735">
    <property type="entry name" value="NAD(P)-binding Rossmann-fold domains"/>
    <property type="match status" value="1"/>
</dbReference>
<dbReference type="PROSITE" id="PS00738">
    <property type="entry name" value="ADOHCYASE_1"/>
    <property type="match status" value="1"/>
</dbReference>
<dbReference type="PROSITE" id="PS00739">
    <property type="entry name" value="ADOHCYASE_2"/>
    <property type="match status" value="1"/>
</dbReference>
<protein>
    <recommendedName>
        <fullName evidence="1">Adenosylhomocysteinase</fullName>
        <ecNumber evidence="1">3.13.2.1</ecNumber>
    </recommendedName>
    <alternativeName>
        <fullName evidence="1">S-adenosyl-L-homocysteine hydrolase</fullName>
        <shortName evidence="1">AdoHcyase</shortName>
    </alternativeName>
</protein>
<accession>C5CM29</accession>
<reference key="1">
    <citation type="journal article" date="2011" name="J. Bacteriol.">
        <title>Complete genome sequence of the metabolically versatile plant growth-promoting endophyte, Variovorax paradoxus S110.</title>
        <authorList>
            <person name="Han J.I."/>
            <person name="Choi H.K."/>
            <person name="Lee S.W."/>
            <person name="Orwin P.M."/>
            <person name="Kim J."/>
            <person name="Laroe S.L."/>
            <person name="Kim T.G."/>
            <person name="O'Neil J."/>
            <person name="Leadbetter J.R."/>
            <person name="Lee S.Y."/>
            <person name="Hur C.G."/>
            <person name="Spain J.C."/>
            <person name="Ovchinnikova G."/>
            <person name="Goodwin L."/>
            <person name="Han C."/>
        </authorList>
    </citation>
    <scope>NUCLEOTIDE SEQUENCE [LARGE SCALE GENOMIC DNA]</scope>
    <source>
        <strain>S110</strain>
    </source>
</reference>
<proteinExistence type="inferred from homology"/>
<feature type="chain" id="PRO_1000212058" description="Adenosylhomocysteinase">
    <location>
        <begin position="1"/>
        <end position="479"/>
    </location>
</feature>
<feature type="binding site" evidence="1">
    <location>
        <position position="65"/>
    </location>
    <ligand>
        <name>substrate</name>
    </ligand>
</feature>
<feature type="binding site" evidence="1">
    <location>
        <position position="144"/>
    </location>
    <ligand>
        <name>substrate</name>
    </ligand>
</feature>
<feature type="binding site" evidence="1">
    <location>
        <position position="204"/>
    </location>
    <ligand>
        <name>substrate</name>
    </ligand>
</feature>
<feature type="binding site" evidence="1">
    <location>
        <begin position="205"/>
        <end position="207"/>
    </location>
    <ligand>
        <name>NAD(+)</name>
        <dbReference type="ChEBI" id="CHEBI:57540"/>
    </ligand>
</feature>
<feature type="binding site" evidence="1">
    <location>
        <position position="234"/>
    </location>
    <ligand>
        <name>substrate</name>
    </ligand>
</feature>
<feature type="binding site" evidence="1">
    <location>
        <position position="238"/>
    </location>
    <ligand>
        <name>substrate</name>
    </ligand>
</feature>
<feature type="binding site" evidence="1">
    <location>
        <position position="239"/>
    </location>
    <ligand>
        <name>NAD(+)</name>
        <dbReference type="ChEBI" id="CHEBI:57540"/>
    </ligand>
</feature>
<feature type="binding site" evidence="1">
    <location>
        <begin position="268"/>
        <end position="273"/>
    </location>
    <ligand>
        <name>NAD(+)</name>
        <dbReference type="ChEBI" id="CHEBI:57540"/>
    </ligand>
</feature>
<feature type="binding site" evidence="1">
    <location>
        <position position="291"/>
    </location>
    <ligand>
        <name>NAD(+)</name>
        <dbReference type="ChEBI" id="CHEBI:57540"/>
    </ligand>
</feature>
<feature type="binding site" evidence="1">
    <location>
        <position position="326"/>
    </location>
    <ligand>
        <name>NAD(+)</name>
        <dbReference type="ChEBI" id="CHEBI:57540"/>
    </ligand>
</feature>
<feature type="binding site" evidence="1">
    <location>
        <begin position="347"/>
        <end position="349"/>
    </location>
    <ligand>
        <name>NAD(+)</name>
        <dbReference type="ChEBI" id="CHEBI:57540"/>
    </ligand>
</feature>
<feature type="binding site" evidence="1">
    <location>
        <position position="392"/>
    </location>
    <ligand>
        <name>NAD(+)</name>
        <dbReference type="ChEBI" id="CHEBI:57540"/>
    </ligand>
</feature>